<dbReference type="EMBL" id="CP000611">
    <property type="protein sequence ID" value="ABQ75268.1"/>
    <property type="molecule type" value="Genomic_DNA"/>
</dbReference>
<dbReference type="RefSeq" id="WP_003418308.1">
    <property type="nucleotide sequence ID" value="NZ_CP016972.1"/>
</dbReference>
<dbReference type="SMR" id="A5U8B8"/>
<dbReference type="GeneID" id="45427432"/>
<dbReference type="KEGG" id="mra:MRA_3483"/>
<dbReference type="eggNOG" id="COG0103">
    <property type="taxonomic scope" value="Bacteria"/>
</dbReference>
<dbReference type="HOGENOM" id="CLU_046483_2_0_11"/>
<dbReference type="Proteomes" id="UP000001988">
    <property type="component" value="Chromosome"/>
</dbReference>
<dbReference type="GO" id="GO:0005737">
    <property type="term" value="C:cytoplasm"/>
    <property type="evidence" value="ECO:0007669"/>
    <property type="project" value="UniProtKB-ARBA"/>
</dbReference>
<dbReference type="GO" id="GO:0015935">
    <property type="term" value="C:small ribosomal subunit"/>
    <property type="evidence" value="ECO:0007669"/>
    <property type="project" value="TreeGrafter"/>
</dbReference>
<dbReference type="GO" id="GO:0003723">
    <property type="term" value="F:RNA binding"/>
    <property type="evidence" value="ECO:0007669"/>
    <property type="project" value="TreeGrafter"/>
</dbReference>
<dbReference type="GO" id="GO:0003735">
    <property type="term" value="F:structural constituent of ribosome"/>
    <property type="evidence" value="ECO:0007669"/>
    <property type="project" value="InterPro"/>
</dbReference>
<dbReference type="GO" id="GO:0006412">
    <property type="term" value="P:translation"/>
    <property type="evidence" value="ECO:0007669"/>
    <property type="project" value="UniProtKB-UniRule"/>
</dbReference>
<dbReference type="FunFam" id="3.30.230.10:FF:000001">
    <property type="entry name" value="30S ribosomal protein S9"/>
    <property type="match status" value="1"/>
</dbReference>
<dbReference type="Gene3D" id="3.30.230.10">
    <property type="match status" value="1"/>
</dbReference>
<dbReference type="HAMAP" id="MF_00532_B">
    <property type="entry name" value="Ribosomal_uS9_B"/>
    <property type="match status" value="1"/>
</dbReference>
<dbReference type="InterPro" id="IPR020568">
    <property type="entry name" value="Ribosomal_Su5_D2-typ_SF"/>
</dbReference>
<dbReference type="InterPro" id="IPR000754">
    <property type="entry name" value="Ribosomal_uS9"/>
</dbReference>
<dbReference type="InterPro" id="IPR023035">
    <property type="entry name" value="Ribosomal_uS9_bac/plastid"/>
</dbReference>
<dbReference type="InterPro" id="IPR020574">
    <property type="entry name" value="Ribosomal_uS9_CS"/>
</dbReference>
<dbReference type="InterPro" id="IPR014721">
    <property type="entry name" value="Ribsml_uS5_D2-typ_fold_subgr"/>
</dbReference>
<dbReference type="NCBIfam" id="NF001099">
    <property type="entry name" value="PRK00132.1"/>
    <property type="match status" value="1"/>
</dbReference>
<dbReference type="PANTHER" id="PTHR21569">
    <property type="entry name" value="RIBOSOMAL PROTEIN S9"/>
    <property type="match status" value="1"/>
</dbReference>
<dbReference type="PANTHER" id="PTHR21569:SF1">
    <property type="entry name" value="SMALL RIBOSOMAL SUBUNIT PROTEIN US9M"/>
    <property type="match status" value="1"/>
</dbReference>
<dbReference type="Pfam" id="PF00380">
    <property type="entry name" value="Ribosomal_S9"/>
    <property type="match status" value="1"/>
</dbReference>
<dbReference type="SUPFAM" id="SSF54211">
    <property type="entry name" value="Ribosomal protein S5 domain 2-like"/>
    <property type="match status" value="1"/>
</dbReference>
<dbReference type="PROSITE" id="PS00360">
    <property type="entry name" value="RIBOSOMAL_S9"/>
    <property type="match status" value="1"/>
</dbReference>
<keyword id="KW-1185">Reference proteome</keyword>
<keyword id="KW-0687">Ribonucleoprotein</keyword>
<keyword id="KW-0689">Ribosomal protein</keyword>
<organism>
    <name type="scientific">Mycobacterium tuberculosis (strain ATCC 25177 / H37Ra)</name>
    <dbReference type="NCBI Taxonomy" id="419947"/>
    <lineage>
        <taxon>Bacteria</taxon>
        <taxon>Bacillati</taxon>
        <taxon>Actinomycetota</taxon>
        <taxon>Actinomycetes</taxon>
        <taxon>Mycobacteriales</taxon>
        <taxon>Mycobacteriaceae</taxon>
        <taxon>Mycobacterium</taxon>
        <taxon>Mycobacterium tuberculosis complex</taxon>
    </lineage>
</organism>
<gene>
    <name evidence="1" type="primary">rpsI</name>
    <name type="ordered locus">MRA_3483</name>
</gene>
<name>RS9_MYCTA</name>
<sequence>MTETTPAPQTPAAPAGPAQSFVLERPIQTVGRRKEAVVRVRLVPGTGKFDLNGRSLEDYFPNKVHQQLIKAPLVTVDRVESFDIFAHLGGGGPSGQAGALRLGIARALILVSPEDRPALKKAGFLTRDPRATERKKYGLKKARKAPQYSKR</sequence>
<comment type="similarity">
    <text evidence="1">Belongs to the universal ribosomal protein uS9 family.</text>
</comment>
<evidence type="ECO:0000255" key="1">
    <source>
        <dbReference type="HAMAP-Rule" id="MF_00532"/>
    </source>
</evidence>
<evidence type="ECO:0000256" key="2">
    <source>
        <dbReference type="SAM" id="MobiDB-lite"/>
    </source>
</evidence>
<evidence type="ECO:0000305" key="3"/>
<protein>
    <recommendedName>
        <fullName evidence="1">Small ribosomal subunit protein uS9</fullName>
    </recommendedName>
    <alternativeName>
        <fullName evidence="3">30S ribosomal protein S9</fullName>
    </alternativeName>
</protein>
<proteinExistence type="inferred from homology"/>
<reference key="1">
    <citation type="journal article" date="2008" name="PLoS ONE">
        <title>Genetic basis of virulence attenuation revealed by comparative genomic analysis of Mycobacterium tuberculosis strain H37Ra versus H37Rv.</title>
        <authorList>
            <person name="Zheng H."/>
            <person name="Lu L."/>
            <person name="Wang B."/>
            <person name="Pu S."/>
            <person name="Zhang X."/>
            <person name="Zhu G."/>
            <person name="Shi W."/>
            <person name="Zhang L."/>
            <person name="Wang H."/>
            <person name="Wang S."/>
            <person name="Zhao G."/>
            <person name="Zhang Y."/>
        </authorList>
    </citation>
    <scope>NUCLEOTIDE SEQUENCE [LARGE SCALE GENOMIC DNA]</scope>
    <source>
        <strain>ATCC 25177 / H37Ra</strain>
    </source>
</reference>
<feature type="chain" id="PRO_1000051263" description="Small ribosomal subunit protein uS9">
    <location>
        <begin position="1"/>
        <end position="151"/>
    </location>
</feature>
<feature type="region of interest" description="Disordered" evidence="2">
    <location>
        <begin position="1"/>
        <end position="20"/>
    </location>
</feature>
<feature type="region of interest" description="Disordered" evidence="2">
    <location>
        <begin position="121"/>
        <end position="151"/>
    </location>
</feature>
<feature type="compositionally biased region" description="Low complexity" evidence="2">
    <location>
        <begin position="1"/>
        <end position="19"/>
    </location>
</feature>
<feature type="compositionally biased region" description="Basic and acidic residues" evidence="2">
    <location>
        <begin position="127"/>
        <end position="136"/>
    </location>
</feature>
<feature type="compositionally biased region" description="Basic residues" evidence="2">
    <location>
        <begin position="137"/>
        <end position="151"/>
    </location>
</feature>
<accession>A5U8B8</accession>